<name>EFTS_RHOBA</name>
<gene>
    <name evidence="1" type="primary">tsf</name>
    <name type="ordered locus">RB10640</name>
</gene>
<organism>
    <name type="scientific">Rhodopirellula baltica (strain DSM 10527 / NCIMB 13988 / SH1)</name>
    <dbReference type="NCBI Taxonomy" id="243090"/>
    <lineage>
        <taxon>Bacteria</taxon>
        <taxon>Pseudomonadati</taxon>
        <taxon>Planctomycetota</taxon>
        <taxon>Planctomycetia</taxon>
        <taxon>Pirellulales</taxon>
        <taxon>Pirellulaceae</taxon>
        <taxon>Rhodopirellula</taxon>
    </lineage>
</organism>
<feature type="chain" id="PRO_0000161182" description="Elongation factor Ts">
    <location>
        <begin position="1"/>
        <end position="326"/>
    </location>
</feature>
<feature type="region of interest" description="Involved in Mg(2+) ion dislocation from EF-Tu" evidence="1">
    <location>
        <begin position="80"/>
        <end position="83"/>
    </location>
</feature>
<sequence length="326" mass="35755">MTTISAKAVSELRKSTGAGMMDCKKALEESGGDLDGAMDYLRKKGQKVAAKRADREASEGVVAAVVEGNKGLLLSLGCETDFVAKNEAFIELTNTIAKMAFDADCKTIDDVNALEIDGTTVKERLVNETGKVGEKIEVTNLEVVEGENLASYIHAGAKIGVLVSYKDGAKDDADQFFRGVSMHIAAMKPSILHPNEFDEEFVQKETEALQAQINAENELNEKENLGKPMKNVPQFASRRQLTPEVLAATEEAIKEELKAEGKPEKIWDKIVPGKLERFIADNTLLDQERCLLSQFYALDDTKTVEAAIKEFHPEAEVVAFKRISVN</sequence>
<comment type="function">
    <text evidence="1">Associates with the EF-Tu.GDP complex and induces the exchange of GDP to GTP. It remains bound to the aminoacyl-tRNA.EF-Tu.GTP complex up to the GTP hydrolysis stage on the ribosome.</text>
</comment>
<comment type="subcellular location">
    <subcellularLocation>
        <location evidence="1">Cytoplasm</location>
    </subcellularLocation>
</comment>
<comment type="similarity">
    <text evidence="1">Belongs to the EF-Ts family.</text>
</comment>
<evidence type="ECO:0000255" key="1">
    <source>
        <dbReference type="HAMAP-Rule" id="MF_00050"/>
    </source>
</evidence>
<dbReference type="EMBL" id="BX294152">
    <property type="protein sequence ID" value="CAD76891.1"/>
    <property type="molecule type" value="Genomic_DNA"/>
</dbReference>
<dbReference type="RefSeq" id="NP_869530.1">
    <property type="nucleotide sequence ID" value="NC_005027.1"/>
</dbReference>
<dbReference type="RefSeq" id="WP_007325915.1">
    <property type="nucleotide sequence ID" value="NC_005027.1"/>
</dbReference>
<dbReference type="SMR" id="Q7UKH3"/>
<dbReference type="FunCoup" id="Q7UKH3">
    <property type="interactions" value="531"/>
</dbReference>
<dbReference type="STRING" id="243090.RB10640"/>
<dbReference type="EnsemblBacteria" id="CAD76891">
    <property type="protein sequence ID" value="CAD76891"/>
    <property type="gene ID" value="RB10640"/>
</dbReference>
<dbReference type="KEGG" id="rba:RB10640"/>
<dbReference type="PATRIC" id="fig|243090.15.peg.5140"/>
<dbReference type="eggNOG" id="COG0264">
    <property type="taxonomic scope" value="Bacteria"/>
</dbReference>
<dbReference type="HOGENOM" id="CLU_047155_0_1_0"/>
<dbReference type="InParanoid" id="Q7UKH3"/>
<dbReference type="OrthoDB" id="9808348at2"/>
<dbReference type="Proteomes" id="UP000001025">
    <property type="component" value="Chromosome"/>
</dbReference>
<dbReference type="GO" id="GO:0005737">
    <property type="term" value="C:cytoplasm"/>
    <property type="evidence" value="ECO:0007669"/>
    <property type="project" value="UniProtKB-SubCell"/>
</dbReference>
<dbReference type="GO" id="GO:0003746">
    <property type="term" value="F:translation elongation factor activity"/>
    <property type="evidence" value="ECO:0000318"/>
    <property type="project" value="GO_Central"/>
</dbReference>
<dbReference type="GO" id="GO:0006414">
    <property type="term" value="P:translational elongation"/>
    <property type="evidence" value="ECO:0000318"/>
    <property type="project" value="GO_Central"/>
</dbReference>
<dbReference type="CDD" id="cd14275">
    <property type="entry name" value="UBA_EF-Ts"/>
    <property type="match status" value="1"/>
</dbReference>
<dbReference type="FunFam" id="1.10.286.20:FF:000004">
    <property type="entry name" value="Elongation factor Ts"/>
    <property type="match status" value="1"/>
</dbReference>
<dbReference type="FunFam" id="1.10.8.10:FF:000001">
    <property type="entry name" value="Elongation factor Ts"/>
    <property type="match status" value="1"/>
</dbReference>
<dbReference type="FunFam" id="3.30.479.20:FF:000018">
    <property type="entry name" value="Elongation factor Ts"/>
    <property type="match status" value="1"/>
</dbReference>
<dbReference type="FunFam" id="3.30.479.20:FF:000036">
    <property type="entry name" value="Elongation factor Ts"/>
    <property type="match status" value="1"/>
</dbReference>
<dbReference type="Gene3D" id="1.10.286.20">
    <property type="match status" value="1"/>
</dbReference>
<dbReference type="Gene3D" id="1.10.8.10">
    <property type="entry name" value="DNA helicase RuvA subunit, C-terminal domain"/>
    <property type="match status" value="1"/>
</dbReference>
<dbReference type="Gene3D" id="3.30.479.20">
    <property type="entry name" value="Elongation factor Ts, dimerisation domain"/>
    <property type="match status" value="2"/>
</dbReference>
<dbReference type="HAMAP" id="MF_00050">
    <property type="entry name" value="EF_Ts"/>
    <property type="match status" value="1"/>
</dbReference>
<dbReference type="InterPro" id="IPR036402">
    <property type="entry name" value="EF-Ts_dimer_sf"/>
</dbReference>
<dbReference type="InterPro" id="IPR001816">
    <property type="entry name" value="Transl_elong_EFTs/EF1B"/>
</dbReference>
<dbReference type="InterPro" id="IPR014039">
    <property type="entry name" value="Transl_elong_EFTs/EF1B_dimer"/>
</dbReference>
<dbReference type="InterPro" id="IPR018101">
    <property type="entry name" value="Transl_elong_Ts_CS"/>
</dbReference>
<dbReference type="InterPro" id="IPR009060">
    <property type="entry name" value="UBA-like_sf"/>
</dbReference>
<dbReference type="NCBIfam" id="TIGR00116">
    <property type="entry name" value="tsf"/>
    <property type="match status" value="1"/>
</dbReference>
<dbReference type="PANTHER" id="PTHR11741">
    <property type="entry name" value="ELONGATION FACTOR TS"/>
    <property type="match status" value="1"/>
</dbReference>
<dbReference type="PANTHER" id="PTHR11741:SF0">
    <property type="entry name" value="ELONGATION FACTOR TS, MITOCHONDRIAL"/>
    <property type="match status" value="1"/>
</dbReference>
<dbReference type="Pfam" id="PF00889">
    <property type="entry name" value="EF_TS"/>
    <property type="match status" value="2"/>
</dbReference>
<dbReference type="SUPFAM" id="SSF54713">
    <property type="entry name" value="Elongation factor Ts (EF-Ts), dimerisation domain"/>
    <property type="match status" value="2"/>
</dbReference>
<dbReference type="SUPFAM" id="SSF46934">
    <property type="entry name" value="UBA-like"/>
    <property type="match status" value="1"/>
</dbReference>
<dbReference type="PROSITE" id="PS01126">
    <property type="entry name" value="EF_TS_1"/>
    <property type="match status" value="1"/>
</dbReference>
<dbReference type="PROSITE" id="PS01127">
    <property type="entry name" value="EF_TS_2"/>
    <property type="match status" value="1"/>
</dbReference>
<reference key="1">
    <citation type="journal article" date="2003" name="Proc. Natl. Acad. Sci. U.S.A.">
        <title>Complete genome sequence of the marine planctomycete Pirellula sp. strain 1.</title>
        <authorList>
            <person name="Gloeckner F.O."/>
            <person name="Kube M."/>
            <person name="Bauer M."/>
            <person name="Teeling H."/>
            <person name="Lombardot T."/>
            <person name="Ludwig W."/>
            <person name="Gade D."/>
            <person name="Beck A."/>
            <person name="Borzym K."/>
            <person name="Heitmann K."/>
            <person name="Rabus R."/>
            <person name="Schlesner H."/>
            <person name="Amann R."/>
            <person name="Reinhardt R."/>
        </authorList>
    </citation>
    <scope>NUCLEOTIDE SEQUENCE [LARGE SCALE GENOMIC DNA]</scope>
    <source>
        <strain>DSM 10527 / NCIMB 13988 / SH1</strain>
    </source>
</reference>
<accession>Q7UKH3</accession>
<protein>
    <recommendedName>
        <fullName evidence="1">Elongation factor Ts</fullName>
        <shortName evidence="1">EF-Ts</shortName>
    </recommendedName>
</protein>
<keyword id="KW-0963">Cytoplasm</keyword>
<keyword id="KW-0251">Elongation factor</keyword>
<keyword id="KW-0648">Protein biosynthesis</keyword>
<keyword id="KW-1185">Reference proteome</keyword>
<proteinExistence type="inferred from homology"/>